<accession>F8G0P1</accession>
<comment type="function">
    <text evidence="3 4">Involved in nicotine degradation (PubMed:26634650, PubMed:35835223). Catalyzes the deamination of pseudooxynicotine to 3-succinoylsemialdehyde-pyridine (PubMed:26634650, PubMed:35835223). Functions as a dehydrogenase that uses the c-type cytochrome protein CycN as the physiological electron acceptor (PubMed:35835223). O(2) is a poor electron acceptor (PubMed:35835223). Pnao is oxidized by CycN 230 times faster than O(2) at equivalent oxidant concentrations (PubMed:35835223).</text>
</comment>
<comment type="catalytic activity">
    <reaction evidence="4">
        <text>pseudooxynicotine + 2 Fe(III)-[cytochrome c] + H2O = 4-oxo-4-(pyridin-3-yl)butanal + methylamine + 2 Fe(II)-[cytochrome c] + 2 H(+)</text>
        <dbReference type="Rhea" id="RHEA:75351"/>
        <dbReference type="Rhea" id="RHEA-COMP:10350"/>
        <dbReference type="Rhea" id="RHEA-COMP:14399"/>
        <dbReference type="ChEBI" id="CHEBI:15377"/>
        <dbReference type="ChEBI" id="CHEBI:15378"/>
        <dbReference type="ChEBI" id="CHEBI:29033"/>
        <dbReference type="ChEBI" id="CHEBI:29034"/>
        <dbReference type="ChEBI" id="CHEBI:59338"/>
        <dbReference type="ChEBI" id="CHEBI:66878"/>
        <dbReference type="ChEBI" id="CHEBI:66879"/>
        <dbReference type="EC" id="1.4.2.3"/>
    </reaction>
    <physiologicalReaction direction="left-to-right" evidence="4">
        <dbReference type="Rhea" id="RHEA:75352"/>
    </physiologicalReaction>
</comment>
<comment type="cofactor">
    <cofactor evidence="3 4">
        <name>FAD</name>
        <dbReference type="ChEBI" id="CHEBI:57692"/>
    </cofactor>
    <text evidence="4">Binds 1 FAD per subunit.</text>
</comment>
<comment type="activity regulation">
    <text evidence="3">Strongly inhibited by Na(2)MoO(4) and FeCl(3) (PubMed:26634650). Activity is nearly twice as high in the presence of Na(2)WO(4) (PubMed:26634650).</text>
</comment>
<comment type="biophysicochemical properties">
    <kinetics>
        <KM evidence="3">0.073 mM for pseudooxynicotine (at 30 degrees Celsius)</KM>
        <text evidence="3">kcat is 0.790 sec(-1) (at 30 degrees Celsius).</text>
    </kinetics>
    <phDependence>
        <text evidence="3">Optimum pH is 8.5.</text>
    </phDependence>
</comment>
<comment type="pathway">
    <text evidence="2">Alkaloid degradation; nicotine degradation.</text>
</comment>
<comment type="subunit">
    <text evidence="4">Homodimer.</text>
</comment>
<comment type="subcellular location">
    <subcellularLocation>
        <location evidence="8">Periplasm</location>
    </subcellularLocation>
</comment>
<comment type="induction">
    <text evidence="2">Expression is up-regulated in the presence of nicotine.</text>
</comment>
<comment type="PTM">
    <text evidence="1">Predicted to be exported by the Tat system. The position of the signal peptide cleavage has not been experimentally proven.</text>
</comment>
<comment type="disruption phenotype">
    <text evidence="2">Deletion mutant can degrade nicotine, but it cannot further degrade N-methylmyosime and use nicotine as the sole carbon and nitrogen source.</text>
</comment>
<comment type="similarity">
    <text evidence="7">Belongs to the flavin monoamine oxidase family.</text>
</comment>
<comment type="caution">
    <text evidence="3 4">Was originally thought to act as an oxidase (PubMed:26634650). However, it was shown later that this enzyme is actually a dehydrogenase, using a cytochrome c as the natural electron acceptor (PubMed:35835223).</text>
</comment>
<keyword id="KW-0002">3D-structure</keyword>
<keyword id="KW-0017">Alkaloid metabolism</keyword>
<keyword id="KW-0274">FAD</keyword>
<keyword id="KW-0285">Flavoprotein</keyword>
<keyword id="KW-0560">Oxidoreductase</keyword>
<keyword id="KW-0574">Periplasm</keyword>
<keyword id="KW-0732">Signal</keyword>
<gene>
    <name evidence="5" type="primary">pnao</name>
    <name evidence="9" type="ORF">PPS_4080</name>
</gene>
<feature type="signal peptide" description="Tat-type signal" evidence="1">
    <location>
        <begin position="1"/>
        <end position="42"/>
    </location>
</feature>
<feature type="chain" id="PRO_0000459073" description="Pseudooxynicotine dehydrogenase">
    <location>
        <begin position="43"/>
        <end position="496"/>
    </location>
</feature>
<feature type="binding site" evidence="4 10">
    <location>
        <position position="69"/>
    </location>
    <ligand>
        <name>FAD</name>
        <dbReference type="ChEBI" id="CHEBI:57692"/>
    </ligand>
</feature>
<feature type="binding site" evidence="4 10">
    <location>
        <position position="88"/>
    </location>
    <ligand>
        <name>FAD</name>
        <dbReference type="ChEBI" id="CHEBI:57692"/>
    </ligand>
</feature>
<feature type="binding site" evidence="4 10">
    <location>
        <position position="96"/>
    </location>
    <ligand>
        <name>FAD</name>
        <dbReference type="ChEBI" id="CHEBI:57692"/>
    </ligand>
</feature>
<feature type="binding site" evidence="4 10">
    <location>
        <position position="113"/>
    </location>
    <ligand>
        <name>FAD</name>
        <dbReference type="ChEBI" id="CHEBI:57692"/>
    </ligand>
</feature>
<feature type="binding site" evidence="4 10">
    <location>
        <position position="285"/>
    </location>
    <ligand>
        <name>FAD</name>
        <dbReference type="ChEBI" id="CHEBI:57692"/>
    </ligand>
</feature>
<feature type="binding site" evidence="4 10">
    <location>
        <position position="461"/>
    </location>
    <ligand>
        <name>FAD</name>
        <dbReference type="ChEBI" id="CHEBI:57692"/>
    </ligand>
</feature>
<feature type="binding site" evidence="4 10">
    <location>
        <position position="471"/>
    </location>
    <ligand>
        <name>FAD</name>
        <dbReference type="ChEBI" id="CHEBI:57692"/>
    </ligand>
</feature>
<feature type="mutagenesis site" description="Extremely unstable at high temperature." evidence="3">
    <original>P</original>
    <variation>S</variation>
    <location>
        <position position="180"/>
    </location>
</feature>
<feature type="strand" evidence="11">
    <location>
        <begin position="59"/>
        <end position="64"/>
    </location>
</feature>
<feature type="helix" evidence="11">
    <location>
        <begin position="68"/>
        <end position="79"/>
    </location>
</feature>
<feature type="strand" evidence="11">
    <location>
        <begin position="84"/>
        <end position="87"/>
    </location>
</feature>
<feature type="strand" evidence="11">
    <location>
        <begin position="89"/>
        <end position="93"/>
    </location>
</feature>
<feature type="strand" evidence="11">
    <location>
        <begin position="107"/>
        <end position="110"/>
    </location>
</feature>
<feature type="helix" evidence="11">
    <location>
        <begin position="119"/>
        <end position="127"/>
    </location>
</feature>
<feature type="strand" evidence="11">
    <location>
        <begin position="132"/>
        <end position="134"/>
    </location>
</feature>
<feature type="turn" evidence="11">
    <location>
        <begin position="137"/>
        <end position="139"/>
    </location>
</feature>
<feature type="strand" evidence="11">
    <location>
        <begin position="142"/>
        <end position="148"/>
    </location>
</feature>
<feature type="strand" evidence="11">
    <location>
        <begin position="151"/>
        <end position="156"/>
    </location>
</feature>
<feature type="helix" evidence="11">
    <location>
        <begin position="157"/>
        <end position="171"/>
    </location>
</feature>
<feature type="turn" evidence="11">
    <location>
        <begin position="172"/>
        <end position="174"/>
    </location>
</feature>
<feature type="helix" evidence="11">
    <location>
        <begin position="175"/>
        <end position="178"/>
    </location>
</feature>
<feature type="turn" evidence="11">
    <location>
        <begin position="185"/>
        <end position="188"/>
    </location>
</feature>
<feature type="helix" evidence="11">
    <location>
        <begin position="189"/>
        <end position="195"/>
    </location>
</feature>
<feature type="helix" evidence="11">
    <location>
        <begin position="200"/>
        <end position="205"/>
    </location>
</feature>
<feature type="helix" evidence="11">
    <location>
        <begin position="211"/>
        <end position="225"/>
    </location>
</feature>
<feature type="turn" evidence="11">
    <location>
        <begin position="229"/>
        <end position="231"/>
    </location>
</feature>
<feature type="helix" evidence="11">
    <location>
        <begin position="234"/>
        <end position="243"/>
    </location>
</feature>
<feature type="turn" evidence="11">
    <location>
        <begin position="244"/>
        <end position="246"/>
    </location>
</feature>
<feature type="helix" evidence="11">
    <location>
        <begin position="248"/>
        <end position="255"/>
    </location>
</feature>
<feature type="strand" evidence="11">
    <location>
        <begin position="258"/>
        <end position="260"/>
    </location>
</feature>
<feature type="helix" evidence="11">
    <location>
        <begin position="264"/>
        <end position="274"/>
    </location>
</feature>
<feature type="strand" evidence="11">
    <location>
        <begin position="278"/>
        <end position="280"/>
    </location>
</feature>
<feature type="strand" evidence="11">
    <location>
        <begin position="285"/>
        <end position="290"/>
    </location>
</feature>
<feature type="strand" evidence="11">
    <location>
        <begin position="295"/>
        <end position="299"/>
    </location>
</feature>
<feature type="strand" evidence="11">
    <location>
        <begin position="302"/>
        <end position="311"/>
    </location>
</feature>
<feature type="helix" evidence="11">
    <location>
        <begin position="315"/>
        <end position="320"/>
    </location>
</feature>
<feature type="strand" evidence="11">
    <location>
        <begin position="321"/>
        <end position="325"/>
    </location>
</feature>
<feature type="helix" evidence="11">
    <location>
        <begin position="329"/>
        <end position="337"/>
    </location>
</feature>
<feature type="strand" evidence="11">
    <location>
        <begin position="344"/>
        <end position="352"/>
    </location>
</feature>
<feature type="strand" evidence="11">
    <location>
        <begin position="356"/>
        <end position="360"/>
    </location>
</feature>
<feature type="strand" evidence="11">
    <location>
        <begin position="369"/>
        <end position="379"/>
    </location>
</feature>
<feature type="strand" evidence="11">
    <location>
        <begin position="382"/>
        <end position="390"/>
    </location>
</feature>
<feature type="helix" evidence="11">
    <location>
        <begin position="392"/>
        <end position="394"/>
    </location>
</feature>
<feature type="helix" evidence="11">
    <location>
        <begin position="400"/>
        <end position="407"/>
    </location>
</feature>
<feature type="turn" evidence="11">
    <location>
        <begin position="408"/>
        <end position="410"/>
    </location>
</feature>
<feature type="strand" evidence="11">
    <location>
        <begin position="416"/>
        <end position="420"/>
    </location>
</feature>
<feature type="turn" evidence="11">
    <location>
        <begin position="424"/>
        <end position="426"/>
    </location>
</feature>
<feature type="turn" evidence="11">
    <location>
        <begin position="428"/>
        <end position="430"/>
    </location>
</feature>
<feature type="strand" evidence="11">
    <location>
        <begin position="431"/>
        <end position="434"/>
    </location>
</feature>
<feature type="helix" evidence="11">
    <location>
        <begin position="441"/>
        <end position="450"/>
    </location>
</feature>
<feature type="strand" evidence="11">
    <location>
        <begin position="456"/>
        <end position="458"/>
    </location>
</feature>
<feature type="helix" evidence="11">
    <location>
        <begin position="461"/>
        <end position="463"/>
    </location>
</feature>
<feature type="strand" evidence="11">
    <location>
        <begin position="465"/>
        <end position="467"/>
    </location>
</feature>
<feature type="helix" evidence="11">
    <location>
        <begin position="471"/>
        <end position="491"/>
    </location>
</feature>
<reference key="1">
    <citation type="journal article" date="2011" name="J. Bacteriol.">
        <title>Complete genome sequence of the nicotine-degrading Pseudomonas putida strain S16.</title>
        <authorList>
            <person name="Yu H."/>
            <person name="Tang H."/>
            <person name="Wang L."/>
            <person name="Yao Y."/>
            <person name="Wu G."/>
            <person name="Xu P."/>
        </authorList>
    </citation>
    <scope>NUCLEOTIDE SEQUENCE [LARGE SCALE GENOMIC DNA]</scope>
    <source>
        <strain>DSM 28022 / S16</strain>
    </source>
</reference>
<reference key="2">
    <citation type="journal article" date="2013" name="PLoS Genet.">
        <title>Systematic unraveling of the unsolved pathway of nicotine degradation in Pseudomonas.</title>
        <authorList>
            <person name="Tang H."/>
            <person name="Wang L."/>
            <person name="Wang W."/>
            <person name="Yu H."/>
            <person name="Zhang K."/>
            <person name="Yao Y."/>
            <person name="Xu P."/>
        </authorList>
    </citation>
    <scope>PATHWAY</scope>
    <scope>INDUCTION</scope>
    <scope>DISRUPTION PHENOTYPE</scope>
    <source>
        <strain>DSM 28022 / S16</strain>
    </source>
</reference>
<reference key="3">
    <citation type="journal article" date="2015" name="Sci. Rep.">
        <title>Characterization of pseudooxynicotine amine oxidase of Pseudomonas putida S16 that is crucial for nicotine degradation.</title>
        <authorList>
            <person name="Hu H."/>
            <person name="Wang W."/>
            <person name="Tang H."/>
            <person name="Xu P."/>
        </authorList>
    </citation>
    <scope>FUNCTION</scope>
    <scope>COFACTOR</scope>
    <scope>ACTIVITY REGULATION</scope>
    <scope>BIOPHYSICOCHEMICAL PROPERTIES</scope>
    <scope>MUTAGENESIS OF PRO-180</scope>
    <source>
        <strain>DSM 28022 / S16</strain>
    </source>
</reference>
<reference evidence="10" key="4">
    <citation type="journal article" date="2022" name="J. Biol. Chem.">
        <title>The enzyme pseudooxynicotine amine oxidase from Pseudomonas putida S16 is not an oxidase, but a dehydrogenase.</title>
        <authorList>
            <person name="Choudhary V."/>
            <person name="Wu K."/>
            <person name="Zhang Z."/>
            <person name="Dulchavsky M."/>
            <person name="Barkman T."/>
            <person name="Bardwell J.C.A."/>
            <person name="Stull F."/>
        </authorList>
    </citation>
    <scope>X-RAY CRYSTALLOGRAPHY (2.60 ANGSTROMS) OF 45-496 IN COMPLEX WITH FAD</scope>
    <scope>FUNCTION</scope>
    <scope>CATALYTIC ACTIVITY</scope>
    <scope>REACTION MECHANISM</scope>
    <scope>COFACTOR</scope>
    <scope>SUBUNIT</scope>
    <source>
        <strain>DSM 28022 / S16</strain>
    </source>
</reference>
<protein>
    <recommendedName>
        <fullName evidence="7">Pseudooxynicotine dehydrogenase</fullName>
        <ecNumber evidence="4">1.4.2.3</ecNumber>
    </recommendedName>
    <alternativeName>
        <fullName evidence="6">Pon amine dehydrogenase</fullName>
    </alternativeName>
    <alternativeName>
        <fullName evidence="5">Pseudooxynicotine amine oxidase</fullName>
        <shortName evidence="5">Pnao</shortName>
    </alternativeName>
</protein>
<organism>
    <name type="scientific">Pseudomonas putida (strain DSM 28022 / S16)</name>
    <dbReference type="NCBI Taxonomy" id="1042876"/>
    <lineage>
        <taxon>Bacteria</taxon>
        <taxon>Pseudomonadati</taxon>
        <taxon>Pseudomonadota</taxon>
        <taxon>Gammaproteobacteria</taxon>
        <taxon>Pseudomonadales</taxon>
        <taxon>Pseudomonadaceae</taxon>
        <taxon>Pseudomonas</taxon>
    </lineage>
</organism>
<proteinExistence type="evidence at protein level"/>
<sequence length="496" mass="54415">MTKDGDEGSKSGVSRRKFLGSAAVGVATAGIASQLLTLSAPAEAAVKTNVGPSRAGVGYDVIVIGGGFAGVTAAREASRSGLKTLILEGRSRLGGRTFTSKLQNQKVELGGTWVHWTQPNVWTEIMHYGLEVEETVGLANPETVIWVTEDNVKRAPAAEAFEIFGSACNEYYKEARNIYPRPFEPFFERKKLQHVDGLSAADYLEKLPLTREQKDMMDSWLSGNGHNYPETIAYSEIMRWFALSNFNMPTMFDSIARYKIKTGTHSLLEAIMADGNSEVKLSTPVTKVNQDKDKVTVTTEDGVFTASAVIVAVPINTLHDIEYSPKLSAAKVDMGSQRHAGAGVKGYIRVKQNVGNVMTYAPARNKLTPFTSVFTDHVDESGTLLIAFSADPKLIDINDIKAVEKALQPLLPGVEVTASYGYDWNLDPFSKGTWCTYRPNQTTRYLTELQKREGRLFFAGSDMANGWRGFIDGAIENGREVGHQVATYLKRENDNA</sequence>
<evidence type="ECO:0000255" key="1">
    <source>
        <dbReference type="PROSITE-ProRule" id="PRU00648"/>
    </source>
</evidence>
<evidence type="ECO:0000269" key="2">
    <source>
    </source>
</evidence>
<evidence type="ECO:0000269" key="3">
    <source>
    </source>
</evidence>
<evidence type="ECO:0000269" key="4">
    <source>
    </source>
</evidence>
<evidence type="ECO:0000303" key="5">
    <source>
    </source>
</evidence>
<evidence type="ECO:0000303" key="6">
    <source>
    </source>
</evidence>
<evidence type="ECO:0000305" key="7"/>
<evidence type="ECO:0000305" key="8">
    <source>
    </source>
</evidence>
<evidence type="ECO:0000312" key="9">
    <source>
        <dbReference type="EMBL" id="AEJ14619.1"/>
    </source>
</evidence>
<evidence type="ECO:0007744" key="10">
    <source>
        <dbReference type="PDB" id="7U6L"/>
    </source>
</evidence>
<evidence type="ECO:0007829" key="11">
    <source>
        <dbReference type="PDB" id="7U6L"/>
    </source>
</evidence>
<name>PNAO_PSEP6</name>
<dbReference type="EC" id="1.4.2.3" evidence="4"/>
<dbReference type="EMBL" id="CP002870">
    <property type="protein sequence ID" value="AEJ14619.1"/>
    <property type="molecule type" value="Genomic_DNA"/>
</dbReference>
<dbReference type="PDB" id="7U6L">
    <property type="method" value="X-ray"/>
    <property type="resolution" value="2.60 A"/>
    <property type="chains" value="A/B/C/D=45-496"/>
</dbReference>
<dbReference type="PDBsum" id="7U6L"/>
<dbReference type="SMR" id="F8G0P1"/>
<dbReference type="KEGG" id="ppt:PPS_4080"/>
<dbReference type="eggNOG" id="COG1231">
    <property type="taxonomic scope" value="Bacteria"/>
</dbReference>
<dbReference type="HOGENOM" id="CLU_004498_9_1_6"/>
<dbReference type="UniPathway" id="UPA00106"/>
<dbReference type="GO" id="GO:0042597">
    <property type="term" value="C:periplasmic space"/>
    <property type="evidence" value="ECO:0007669"/>
    <property type="project" value="UniProtKB-SubCell"/>
</dbReference>
<dbReference type="GO" id="GO:0016491">
    <property type="term" value="F:oxidoreductase activity"/>
    <property type="evidence" value="ECO:0007669"/>
    <property type="project" value="UniProtKB-KW"/>
</dbReference>
<dbReference type="GO" id="GO:0009820">
    <property type="term" value="P:alkaloid metabolic process"/>
    <property type="evidence" value="ECO:0007669"/>
    <property type="project" value="UniProtKB-KW"/>
</dbReference>
<dbReference type="GO" id="GO:0019608">
    <property type="term" value="P:nicotine catabolic process"/>
    <property type="evidence" value="ECO:0007669"/>
    <property type="project" value="UniProtKB-UniPathway"/>
</dbReference>
<dbReference type="Gene3D" id="3.90.660.10">
    <property type="match status" value="2"/>
</dbReference>
<dbReference type="Gene3D" id="3.50.50.60">
    <property type="entry name" value="FAD/NAD(P)-binding domain"/>
    <property type="match status" value="2"/>
</dbReference>
<dbReference type="InterPro" id="IPR002937">
    <property type="entry name" value="Amino_oxidase"/>
</dbReference>
<dbReference type="InterPro" id="IPR036188">
    <property type="entry name" value="FAD/NAD-bd_sf"/>
</dbReference>
<dbReference type="InterPro" id="IPR001613">
    <property type="entry name" value="Flavin_amine_oxidase"/>
</dbReference>
<dbReference type="InterPro" id="IPR050703">
    <property type="entry name" value="Flavin_MAO"/>
</dbReference>
<dbReference type="InterPro" id="IPR006311">
    <property type="entry name" value="TAT_signal"/>
</dbReference>
<dbReference type="InterPro" id="IPR019546">
    <property type="entry name" value="TAT_signal_bac_arc"/>
</dbReference>
<dbReference type="NCBIfam" id="TIGR01409">
    <property type="entry name" value="TAT_signal_seq"/>
    <property type="match status" value="1"/>
</dbReference>
<dbReference type="PANTHER" id="PTHR43563">
    <property type="entry name" value="AMINE OXIDASE"/>
    <property type="match status" value="1"/>
</dbReference>
<dbReference type="PANTHER" id="PTHR43563:SF1">
    <property type="entry name" value="AMINE OXIDASE [FLAVIN-CONTAINING] B"/>
    <property type="match status" value="1"/>
</dbReference>
<dbReference type="Pfam" id="PF01593">
    <property type="entry name" value="Amino_oxidase"/>
    <property type="match status" value="1"/>
</dbReference>
<dbReference type="PRINTS" id="PR00757">
    <property type="entry name" value="AMINEOXDASEF"/>
</dbReference>
<dbReference type="SUPFAM" id="SSF51905">
    <property type="entry name" value="FAD/NAD(P)-binding domain"/>
    <property type="match status" value="1"/>
</dbReference>
<dbReference type="PROSITE" id="PS51318">
    <property type="entry name" value="TAT"/>
    <property type="match status" value="1"/>
</dbReference>